<proteinExistence type="inferred from homology"/>
<accession>B4TFY4</accession>
<organism>
    <name type="scientific">Salmonella heidelberg (strain SL476)</name>
    <dbReference type="NCBI Taxonomy" id="454169"/>
    <lineage>
        <taxon>Bacteria</taxon>
        <taxon>Pseudomonadati</taxon>
        <taxon>Pseudomonadota</taxon>
        <taxon>Gammaproteobacteria</taxon>
        <taxon>Enterobacterales</taxon>
        <taxon>Enterobacteriaceae</taxon>
        <taxon>Salmonella</taxon>
    </lineage>
</organism>
<sequence>MSEKHPGPLVVEGKLSDAERMKLESNYLRGTIAEDLNDGLTGGFKGDNFLLIRFHGMYQQDDRDIRAERAAQKLEPRHAMLLRCRLPGGVITTTQWQAIDKFAADNTIYGSIRLTNRQTFQFHGILKKNVKPVHQMLHSVGLDALATANDMNRNVLCTSNPYESQLHAEAYEWAKKISEHLLPRTRAYAEIWLDQEKVATTDEEPILGQTYLPRKFKTTVVIPPQNDIDLHANDMNFVAIAENGKLVGFNLLVGGGLSIEHGNKKTYARTASEFGYLPLEHTLAVAEAVVTTQRDWGNRTDRKNAKTKYTLERVGLETFKAEVERRAGIKFEPIRPYEFTGRGDRIGWVKGIDNNWHLTLFIENGRILDYPGRPLKTGLLEIAKIHQGEFRITANQNLIIASVPESQKAKIETLARDHGLMNAVSAQRENSMACVSFPTCPLAMAEAERFLPSFTDKVEAILEKHGIPDEHIVMRVTGCPNGCGRAMLAEIGLVGKAPGRYNLHLGGNRIGTRIPRMYKENITEPDILASLGELIGRWAKEREAGEGFGDFTVRAGIIRPVLDPARDFWE</sequence>
<feature type="chain" id="PRO_1000146657" description="Sulfite reductase [NADPH] hemoprotein beta-component">
    <location>
        <begin position="1"/>
        <end position="570"/>
    </location>
</feature>
<feature type="binding site" evidence="1">
    <location>
        <position position="434"/>
    </location>
    <ligand>
        <name>[4Fe-4S] cluster</name>
        <dbReference type="ChEBI" id="CHEBI:49883"/>
    </ligand>
</feature>
<feature type="binding site" evidence="1">
    <location>
        <position position="440"/>
    </location>
    <ligand>
        <name>[4Fe-4S] cluster</name>
        <dbReference type="ChEBI" id="CHEBI:49883"/>
    </ligand>
</feature>
<feature type="binding site" evidence="1">
    <location>
        <position position="479"/>
    </location>
    <ligand>
        <name>[4Fe-4S] cluster</name>
        <dbReference type="ChEBI" id="CHEBI:49883"/>
    </ligand>
</feature>
<feature type="binding site" evidence="1">
    <location>
        <position position="483"/>
    </location>
    <ligand>
        <name>[4Fe-4S] cluster</name>
        <dbReference type="ChEBI" id="CHEBI:49883"/>
    </ligand>
</feature>
<feature type="binding site" description="axial binding residue" evidence="1">
    <location>
        <position position="483"/>
    </location>
    <ligand>
        <name>siroheme</name>
        <dbReference type="ChEBI" id="CHEBI:60052"/>
    </ligand>
    <ligandPart>
        <name>Fe</name>
        <dbReference type="ChEBI" id="CHEBI:18248"/>
    </ligandPart>
</feature>
<comment type="function">
    <text evidence="1">Component of the sulfite reductase complex that catalyzes the 6-electron reduction of sulfite to sulfide. This is one of several activities required for the biosynthesis of L-cysteine from sulfate.</text>
</comment>
<comment type="catalytic activity">
    <reaction evidence="1">
        <text>hydrogen sulfide + 3 NADP(+) + 3 H2O = sulfite + 3 NADPH + 4 H(+)</text>
        <dbReference type="Rhea" id="RHEA:13801"/>
        <dbReference type="ChEBI" id="CHEBI:15377"/>
        <dbReference type="ChEBI" id="CHEBI:15378"/>
        <dbReference type="ChEBI" id="CHEBI:17359"/>
        <dbReference type="ChEBI" id="CHEBI:29919"/>
        <dbReference type="ChEBI" id="CHEBI:57783"/>
        <dbReference type="ChEBI" id="CHEBI:58349"/>
        <dbReference type="EC" id="1.8.1.2"/>
    </reaction>
</comment>
<comment type="cofactor">
    <cofactor evidence="1">
        <name>siroheme</name>
        <dbReference type="ChEBI" id="CHEBI:60052"/>
    </cofactor>
    <text evidence="1">Binds 1 siroheme per subunit.</text>
</comment>
<comment type="cofactor">
    <cofactor evidence="1">
        <name>[4Fe-4S] cluster</name>
        <dbReference type="ChEBI" id="CHEBI:49883"/>
    </cofactor>
    <text evidence="1">Binds 1 [4Fe-4S] cluster per subunit.</text>
</comment>
<comment type="pathway">
    <text evidence="1">Sulfur metabolism; hydrogen sulfide biosynthesis; hydrogen sulfide from sulfite (NADPH route): step 1/1.</text>
</comment>
<comment type="subunit">
    <text evidence="1">Alpha(8)-beta(8). The alpha component is a flavoprotein, the beta component is a hemoprotein.</text>
</comment>
<comment type="similarity">
    <text evidence="1">Belongs to the nitrite and sulfite reductase 4Fe-4S domain family.</text>
</comment>
<name>CYSI_SALHS</name>
<reference key="1">
    <citation type="journal article" date="2011" name="J. Bacteriol.">
        <title>Comparative genomics of 28 Salmonella enterica isolates: evidence for CRISPR-mediated adaptive sublineage evolution.</title>
        <authorList>
            <person name="Fricke W.F."/>
            <person name="Mammel M.K."/>
            <person name="McDermott P.F."/>
            <person name="Tartera C."/>
            <person name="White D.G."/>
            <person name="Leclerc J.E."/>
            <person name="Ravel J."/>
            <person name="Cebula T.A."/>
        </authorList>
    </citation>
    <scope>NUCLEOTIDE SEQUENCE [LARGE SCALE GENOMIC DNA]</scope>
    <source>
        <strain>SL476</strain>
    </source>
</reference>
<dbReference type="EC" id="1.8.1.2" evidence="1"/>
<dbReference type="EMBL" id="CP001120">
    <property type="protein sequence ID" value="ACF69807.1"/>
    <property type="molecule type" value="Genomic_DNA"/>
</dbReference>
<dbReference type="RefSeq" id="WP_001290663.1">
    <property type="nucleotide sequence ID" value="NC_011083.1"/>
</dbReference>
<dbReference type="SMR" id="B4TFY4"/>
<dbReference type="KEGG" id="seh:SeHA_C3142"/>
<dbReference type="HOGENOM" id="CLU_001975_3_2_6"/>
<dbReference type="UniPathway" id="UPA00140">
    <property type="reaction ID" value="UER00207"/>
</dbReference>
<dbReference type="Proteomes" id="UP000001866">
    <property type="component" value="Chromosome"/>
</dbReference>
<dbReference type="GO" id="GO:0009337">
    <property type="term" value="C:sulfite reductase complex (NADPH)"/>
    <property type="evidence" value="ECO:0007669"/>
    <property type="project" value="InterPro"/>
</dbReference>
<dbReference type="GO" id="GO:0051539">
    <property type="term" value="F:4 iron, 4 sulfur cluster binding"/>
    <property type="evidence" value="ECO:0007669"/>
    <property type="project" value="UniProtKB-KW"/>
</dbReference>
<dbReference type="GO" id="GO:0020037">
    <property type="term" value="F:heme binding"/>
    <property type="evidence" value="ECO:0007669"/>
    <property type="project" value="InterPro"/>
</dbReference>
<dbReference type="GO" id="GO:0046872">
    <property type="term" value="F:metal ion binding"/>
    <property type="evidence" value="ECO:0007669"/>
    <property type="project" value="UniProtKB-KW"/>
</dbReference>
<dbReference type="GO" id="GO:0050661">
    <property type="term" value="F:NADP binding"/>
    <property type="evidence" value="ECO:0007669"/>
    <property type="project" value="InterPro"/>
</dbReference>
<dbReference type="GO" id="GO:0050311">
    <property type="term" value="F:sulfite reductase (ferredoxin) activity"/>
    <property type="evidence" value="ECO:0007669"/>
    <property type="project" value="TreeGrafter"/>
</dbReference>
<dbReference type="GO" id="GO:0004783">
    <property type="term" value="F:sulfite reductase (NADPH) activity"/>
    <property type="evidence" value="ECO:0007669"/>
    <property type="project" value="UniProtKB-UniRule"/>
</dbReference>
<dbReference type="GO" id="GO:0019344">
    <property type="term" value="P:cysteine biosynthetic process"/>
    <property type="evidence" value="ECO:0007669"/>
    <property type="project" value="UniProtKB-KW"/>
</dbReference>
<dbReference type="GO" id="GO:0070814">
    <property type="term" value="P:hydrogen sulfide biosynthetic process"/>
    <property type="evidence" value="ECO:0007669"/>
    <property type="project" value="UniProtKB-UniRule"/>
</dbReference>
<dbReference type="GO" id="GO:0000103">
    <property type="term" value="P:sulfate assimilation"/>
    <property type="evidence" value="ECO:0007669"/>
    <property type="project" value="UniProtKB-UniRule"/>
</dbReference>
<dbReference type="FunFam" id="3.30.413.10:FF:000003">
    <property type="entry name" value="Sulfite reductase [NADPH] hemoprotein beta-component"/>
    <property type="match status" value="1"/>
</dbReference>
<dbReference type="FunFam" id="3.30.413.10:FF:000004">
    <property type="entry name" value="Sulfite reductase [NADPH] hemoprotein beta-component"/>
    <property type="match status" value="1"/>
</dbReference>
<dbReference type="Gene3D" id="3.30.413.10">
    <property type="entry name" value="Sulfite Reductase Hemoprotein, domain 1"/>
    <property type="match status" value="2"/>
</dbReference>
<dbReference type="HAMAP" id="MF_01540">
    <property type="entry name" value="CysI"/>
    <property type="match status" value="1"/>
</dbReference>
<dbReference type="InterPro" id="IPR011786">
    <property type="entry name" value="CysI"/>
</dbReference>
<dbReference type="InterPro" id="IPR005117">
    <property type="entry name" value="NiRdtase/SiRdtase_haem-b_fer"/>
</dbReference>
<dbReference type="InterPro" id="IPR036136">
    <property type="entry name" value="Nit/Sulf_reduc_fer-like_dom_sf"/>
</dbReference>
<dbReference type="InterPro" id="IPR006067">
    <property type="entry name" value="NO2/SO3_Rdtase_4Fe4S_dom"/>
</dbReference>
<dbReference type="InterPro" id="IPR045169">
    <property type="entry name" value="NO2/SO3_Rdtase_4Fe4S_prot"/>
</dbReference>
<dbReference type="InterPro" id="IPR045854">
    <property type="entry name" value="NO2/SO3_Rdtase_4Fe4S_sf"/>
</dbReference>
<dbReference type="InterPro" id="IPR006066">
    <property type="entry name" value="NO2/SO3_Rdtase_FeS/sirohaem_BS"/>
</dbReference>
<dbReference type="NCBIfam" id="TIGR02041">
    <property type="entry name" value="CysI"/>
    <property type="match status" value="1"/>
</dbReference>
<dbReference type="NCBIfam" id="NF010029">
    <property type="entry name" value="PRK13504.1"/>
    <property type="match status" value="1"/>
</dbReference>
<dbReference type="PANTHER" id="PTHR11493:SF47">
    <property type="entry name" value="SULFITE REDUCTASE [NADPH] SUBUNIT BETA"/>
    <property type="match status" value="1"/>
</dbReference>
<dbReference type="PANTHER" id="PTHR11493">
    <property type="entry name" value="SULFITE REDUCTASE [NADPH] SUBUNIT BETA-RELATED"/>
    <property type="match status" value="1"/>
</dbReference>
<dbReference type="Pfam" id="PF01077">
    <property type="entry name" value="NIR_SIR"/>
    <property type="match status" value="1"/>
</dbReference>
<dbReference type="Pfam" id="PF03460">
    <property type="entry name" value="NIR_SIR_ferr"/>
    <property type="match status" value="2"/>
</dbReference>
<dbReference type="PRINTS" id="PR00397">
    <property type="entry name" value="SIROHAEM"/>
</dbReference>
<dbReference type="SUPFAM" id="SSF56014">
    <property type="entry name" value="Nitrite and sulphite reductase 4Fe-4S domain-like"/>
    <property type="match status" value="2"/>
</dbReference>
<dbReference type="SUPFAM" id="SSF55124">
    <property type="entry name" value="Nitrite/Sulfite reductase N-terminal domain-like"/>
    <property type="match status" value="2"/>
</dbReference>
<dbReference type="PROSITE" id="PS00365">
    <property type="entry name" value="NIR_SIR"/>
    <property type="match status" value="1"/>
</dbReference>
<evidence type="ECO:0000255" key="1">
    <source>
        <dbReference type="HAMAP-Rule" id="MF_01540"/>
    </source>
</evidence>
<protein>
    <recommendedName>
        <fullName evidence="1">Sulfite reductase [NADPH] hemoprotein beta-component</fullName>
        <shortName evidence="1">SiR-HP</shortName>
        <shortName evidence="1">SiRHP</shortName>
        <ecNumber evidence="1">1.8.1.2</ecNumber>
    </recommendedName>
</protein>
<keyword id="KW-0004">4Fe-4S</keyword>
<keyword id="KW-0028">Amino-acid biosynthesis</keyword>
<keyword id="KW-0198">Cysteine biosynthesis</keyword>
<keyword id="KW-0349">Heme</keyword>
<keyword id="KW-0408">Iron</keyword>
<keyword id="KW-0411">Iron-sulfur</keyword>
<keyword id="KW-0479">Metal-binding</keyword>
<keyword id="KW-0521">NADP</keyword>
<keyword id="KW-0560">Oxidoreductase</keyword>
<gene>
    <name evidence="1" type="primary">cysI</name>
    <name type="ordered locus">SeHA_C3142</name>
</gene>